<organism>
    <name type="scientific">Drosophila simulans</name>
    <name type="common">Fruit fly</name>
    <dbReference type="NCBI Taxonomy" id="7240"/>
    <lineage>
        <taxon>Eukaryota</taxon>
        <taxon>Metazoa</taxon>
        <taxon>Ecdysozoa</taxon>
        <taxon>Arthropoda</taxon>
        <taxon>Hexapoda</taxon>
        <taxon>Insecta</taxon>
        <taxon>Pterygota</taxon>
        <taxon>Neoptera</taxon>
        <taxon>Endopterygota</taxon>
        <taxon>Diptera</taxon>
        <taxon>Brachycera</taxon>
        <taxon>Muscomorpha</taxon>
        <taxon>Ephydroidea</taxon>
        <taxon>Drosophilidae</taxon>
        <taxon>Drosophila</taxon>
        <taxon>Sophophora</taxon>
    </lineage>
</organism>
<gene>
    <name type="primary">Zw</name>
    <name type="synonym">G6pd</name>
</gene>
<reference key="1">
    <citation type="journal article" date="1994" name="Ann. Entomol. Soc. Am.">
        <title>Phylogenetic utility of partial DNA sequences of G6PDH at different taxonomic levels in Hexapoda with emphasis on Diptera.</title>
        <authorList>
            <person name="Soto-Adames F.N."/>
            <person name="Robertson H.M."/>
            <person name="Berlocher S.H."/>
        </authorList>
        <dbReference type="AGRICOLA" id="IND20440286"/>
    </citation>
    <scope>NUCLEOTIDE SEQUENCE [MRNA]</scope>
</reference>
<evidence type="ECO:0000250" key="1">
    <source>
        <dbReference type="UniProtKB" id="P11413"/>
    </source>
</evidence>
<evidence type="ECO:0000305" key="2"/>
<dbReference type="EC" id="1.1.1.49" evidence="1"/>
<dbReference type="EMBL" id="U09035">
    <property type="protein sequence ID" value="AAB02779.1"/>
    <property type="molecule type" value="mRNA"/>
</dbReference>
<dbReference type="SMR" id="Q24625"/>
<dbReference type="OrthoDB" id="60984at2759"/>
<dbReference type="UniPathway" id="UPA00115">
    <property type="reaction ID" value="UER00408"/>
</dbReference>
<dbReference type="GO" id="GO:0005829">
    <property type="term" value="C:cytosol"/>
    <property type="evidence" value="ECO:0007669"/>
    <property type="project" value="UniProtKB-SubCell"/>
</dbReference>
<dbReference type="GO" id="GO:0004345">
    <property type="term" value="F:glucose-6-phosphate dehydrogenase activity"/>
    <property type="evidence" value="ECO:0000250"/>
    <property type="project" value="UniProtKB"/>
</dbReference>
<dbReference type="GO" id="GO:0050661">
    <property type="term" value="F:NADP binding"/>
    <property type="evidence" value="ECO:0007669"/>
    <property type="project" value="InterPro"/>
</dbReference>
<dbReference type="GO" id="GO:0051156">
    <property type="term" value="P:glucose 6-phosphate metabolic process"/>
    <property type="evidence" value="ECO:0000250"/>
    <property type="project" value="UniProtKB"/>
</dbReference>
<dbReference type="GO" id="GO:0006006">
    <property type="term" value="P:glucose metabolic process"/>
    <property type="evidence" value="ECO:0007669"/>
    <property type="project" value="UniProtKB-KW"/>
</dbReference>
<dbReference type="GO" id="GO:0006739">
    <property type="term" value="P:NADP metabolic process"/>
    <property type="evidence" value="ECO:0000250"/>
    <property type="project" value="UniProtKB"/>
</dbReference>
<dbReference type="GO" id="GO:0009051">
    <property type="term" value="P:pentose-phosphate shunt, oxidative branch"/>
    <property type="evidence" value="ECO:0007669"/>
    <property type="project" value="EnsemblMetazoa"/>
</dbReference>
<dbReference type="FunFam" id="3.40.50.720:FF:000111">
    <property type="entry name" value="Glucose-6-phosphate 1-dehydrogenase"/>
    <property type="match status" value="1"/>
</dbReference>
<dbReference type="Gene3D" id="3.40.50.720">
    <property type="entry name" value="NAD(P)-binding Rossmann-like Domain"/>
    <property type="match status" value="1"/>
</dbReference>
<dbReference type="InterPro" id="IPR001282">
    <property type="entry name" value="G6P_DH"/>
</dbReference>
<dbReference type="InterPro" id="IPR022674">
    <property type="entry name" value="G6P_DH_NAD-bd"/>
</dbReference>
<dbReference type="InterPro" id="IPR036291">
    <property type="entry name" value="NAD(P)-bd_dom_sf"/>
</dbReference>
<dbReference type="PANTHER" id="PTHR23429:SF0">
    <property type="entry name" value="GLUCOSE-6-PHOSPHATE 1-DEHYDROGENASE"/>
    <property type="match status" value="1"/>
</dbReference>
<dbReference type="PANTHER" id="PTHR23429">
    <property type="entry name" value="GLUCOSE-6-PHOSPHATE 1-DEHYDROGENASE G6PD"/>
    <property type="match status" value="1"/>
</dbReference>
<dbReference type="Pfam" id="PF00479">
    <property type="entry name" value="G6PD_N"/>
    <property type="match status" value="1"/>
</dbReference>
<dbReference type="PRINTS" id="PR00079">
    <property type="entry name" value="G6PDHDRGNASE"/>
</dbReference>
<dbReference type="SUPFAM" id="SSF51735">
    <property type="entry name" value="NAD(P)-binding Rossmann-fold domains"/>
    <property type="match status" value="1"/>
</dbReference>
<feature type="chain" id="PRO_0000068093" description="Glucose-6-phosphate 1-dehydrogenase">
    <location>
        <begin position="1" status="less than"/>
        <end position="153" status="greater than"/>
    </location>
</feature>
<feature type="binding site" evidence="1">
    <location>
        <position position="21"/>
    </location>
    <ligand>
        <name>NADP(+)</name>
        <dbReference type="ChEBI" id="CHEBI:58349"/>
        <label>1</label>
    </ligand>
</feature>
<feature type="binding site" evidence="1">
    <location>
        <position position="120"/>
    </location>
    <ligand>
        <name>D-glucose 6-phosphate</name>
        <dbReference type="ChEBI" id="CHEBI:61548"/>
    </ligand>
</feature>
<feature type="binding site" evidence="1">
    <location>
        <position position="120"/>
    </location>
    <ligand>
        <name>NADP(+)</name>
        <dbReference type="ChEBI" id="CHEBI:58349"/>
        <label>1</label>
    </ligand>
</feature>
<feature type="non-terminal residue">
    <location>
        <position position="1"/>
    </location>
</feature>
<feature type="non-terminal residue">
    <location>
        <position position="153"/>
    </location>
</feature>
<name>G6PD_DROSI</name>
<keyword id="KW-0119">Carbohydrate metabolism</keyword>
<keyword id="KW-0963">Cytoplasm</keyword>
<keyword id="KW-0313">Glucose metabolism</keyword>
<keyword id="KW-0521">NADP</keyword>
<keyword id="KW-0560">Oxidoreductase</keyword>
<protein>
    <recommendedName>
        <fullName>Glucose-6-phosphate 1-dehydrogenase</fullName>
        <shortName>G6PD</shortName>
        <ecNumber evidence="1">1.1.1.49</ecNumber>
    </recommendedName>
    <alternativeName>
        <fullName>Zwischenferment</fullName>
    </alternativeName>
</protein>
<comment type="function">
    <text evidence="1">Cytosolic glucose-6-phosphate dehydrogenase that catalyzes the first and rate-limiting step of the oxidative branch within the pentose phosphate pathway/shunt, an alternative route to glycolysis for the dissimilation of carbohydrates and a major source of reducing power and metabolic intermediates for fatty acid and nucleic acid biosynthetic processes.</text>
</comment>
<comment type="catalytic activity">
    <reaction evidence="1">
        <text>D-glucose 6-phosphate + NADP(+) = 6-phospho-D-glucono-1,5-lactone + NADPH + H(+)</text>
        <dbReference type="Rhea" id="RHEA:15841"/>
        <dbReference type="ChEBI" id="CHEBI:15378"/>
        <dbReference type="ChEBI" id="CHEBI:57783"/>
        <dbReference type="ChEBI" id="CHEBI:57955"/>
        <dbReference type="ChEBI" id="CHEBI:58349"/>
        <dbReference type="ChEBI" id="CHEBI:61548"/>
        <dbReference type="EC" id="1.1.1.49"/>
    </reaction>
    <physiologicalReaction direction="left-to-right" evidence="1">
        <dbReference type="Rhea" id="RHEA:15842"/>
    </physiologicalReaction>
</comment>
<comment type="pathway">
    <text evidence="1">Carbohydrate degradation; pentose phosphate pathway; D-ribulose 5-phosphate from D-glucose 6-phosphate (oxidative stage): step 1/3.</text>
</comment>
<comment type="subcellular location">
    <subcellularLocation>
        <location evidence="1">Cytoplasm</location>
        <location evidence="1">Cytosol</location>
    </subcellularLocation>
</comment>
<comment type="similarity">
    <text evidence="2">Belongs to the glucose-6-phosphate dehydrogenase family.</text>
</comment>
<proteinExistence type="evidence at transcript level"/>
<sequence>LWWLYRDDLLPKPTKFCGYARSMLTTETLKEQCLPYMKVQPHEQNKYEEFWALNDYVSGRYDGRTSFEVLNQRLEMMENKNKANRIFYLALPPSVFEEVTVNIKQVCMSLCGWNRVIIEKPFGRDDASSQALSDHLAGLFNEDQLYRIDHYLG</sequence>
<accession>Q24625</accession>